<sequence length="452" mass="50470">MKLPVVAIIGRPNVGKSTLVNRIAGDQQAIVFDQPGITRDRTYQPAFWCDRDFQIVDTGGLVFNDDSEFLPLIREQALIALAEASVAIFVVDGQGGITAGDREIAAWLRQQNVPILLAVNKCESVEQGILQATEFWELAIGEPFPISAIHGSGTGELLDAVIKYLPPAAEIPENEEIKVAIIGRPNVGKSSLLNALTGQQRAIVSPISGTTRDSIDTLIEREGQVYRLIDTAGIRRKKNVDYGAEFFSINRAFKAIRRSDVVLFVIDVLDGVTEQDLKLAGRIIEEGRAVVLVVNKWDAVEKDTYTINTYTKMLQDRLYFMDWAEMIFVSAMTGQRVTKILELVDIAAESHRRRVSTSVINDVIEEAVKWHNPPTTRGGKQGKLYYGTQVSSQPPTIALFVNDPQRFNDNYRRYIEGQFRQQLGFKGTPIRLIWRGKPAREVEKTVNRATKV</sequence>
<organism>
    <name type="scientific">Microcystis aeruginosa (strain NIES-843 / IAM M-2473)</name>
    <dbReference type="NCBI Taxonomy" id="449447"/>
    <lineage>
        <taxon>Bacteria</taxon>
        <taxon>Bacillati</taxon>
        <taxon>Cyanobacteriota</taxon>
        <taxon>Cyanophyceae</taxon>
        <taxon>Oscillatoriophycideae</taxon>
        <taxon>Chroococcales</taxon>
        <taxon>Microcystaceae</taxon>
        <taxon>Microcystis</taxon>
    </lineage>
</organism>
<name>DER_MICAN</name>
<comment type="function">
    <text evidence="1">GTPase that plays an essential role in the late steps of ribosome biogenesis.</text>
</comment>
<comment type="subunit">
    <text evidence="1">Associates with the 50S ribosomal subunit.</text>
</comment>
<comment type="similarity">
    <text evidence="1">Belongs to the TRAFAC class TrmE-Era-EngA-EngB-Septin-like GTPase superfamily. EngA (Der) GTPase family.</text>
</comment>
<evidence type="ECO:0000255" key="1">
    <source>
        <dbReference type="HAMAP-Rule" id="MF_00195"/>
    </source>
</evidence>
<feature type="chain" id="PRO_1000077662" description="GTPase Der">
    <location>
        <begin position="1"/>
        <end position="452"/>
    </location>
</feature>
<feature type="domain" description="EngA-type G 1">
    <location>
        <begin position="4"/>
        <end position="169"/>
    </location>
</feature>
<feature type="domain" description="EngA-type G 2">
    <location>
        <begin position="177"/>
        <end position="352"/>
    </location>
</feature>
<feature type="domain" description="KH-like" evidence="1">
    <location>
        <begin position="353"/>
        <end position="438"/>
    </location>
</feature>
<feature type="binding site" evidence="1">
    <location>
        <begin position="10"/>
        <end position="17"/>
    </location>
    <ligand>
        <name>GTP</name>
        <dbReference type="ChEBI" id="CHEBI:37565"/>
        <label>1</label>
    </ligand>
</feature>
<feature type="binding site" evidence="1">
    <location>
        <begin position="57"/>
        <end position="61"/>
    </location>
    <ligand>
        <name>GTP</name>
        <dbReference type="ChEBI" id="CHEBI:37565"/>
        <label>1</label>
    </ligand>
</feature>
<feature type="binding site" evidence="1">
    <location>
        <begin position="120"/>
        <end position="123"/>
    </location>
    <ligand>
        <name>GTP</name>
        <dbReference type="ChEBI" id="CHEBI:37565"/>
        <label>1</label>
    </ligand>
</feature>
<feature type="binding site" evidence="1">
    <location>
        <begin position="183"/>
        <end position="190"/>
    </location>
    <ligand>
        <name>GTP</name>
        <dbReference type="ChEBI" id="CHEBI:37565"/>
        <label>2</label>
    </ligand>
</feature>
<feature type="binding site" evidence="1">
    <location>
        <begin position="230"/>
        <end position="234"/>
    </location>
    <ligand>
        <name>GTP</name>
        <dbReference type="ChEBI" id="CHEBI:37565"/>
        <label>2</label>
    </ligand>
</feature>
<feature type="binding site" evidence="1">
    <location>
        <begin position="295"/>
        <end position="298"/>
    </location>
    <ligand>
        <name>GTP</name>
        <dbReference type="ChEBI" id="CHEBI:37565"/>
        <label>2</label>
    </ligand>
</feature>
<protein>
    <recommendedName>
        <fullName evidence="1">GTPase Der</fullName>
    </recommendedName>
    <alternativeName>
        <fullName evidence="1">GTP-binding protein EngA</fullName>
    </alternativeName>
</protein>
<keyword id="KW-0342">GTP-binding</keyword>
<keyword id="KW-0547">Nucleotide-binding</keyword>
<keyword id="KW-0677">Repeat</keyword>
<keyword id="KW-0690">Ribosome biogenesis</keyword>
<proteinExistence type="inferred from homology"/>
<gene>
    <name evidence="1" type="primary">der</name>
    <name type="synonym">engA</name>
    <name type="ordered locus">MAE_00810</name>
</gene>
<accession>B0JFL6</accession>
<dbReference type="EMBL" id="AP009552">
    <property type="protein sequence ID" value="BAF99902.1"/>
    <property type="molecule type" value="Genomic_DNA"/>
</dbReference>
<dbReference type="RefSeq" id="WP_002761352.1">
    <property type="nucleotide sequence ID" value="NC_010296.1"/>
</dbReference>
<dbReference type="SMR" id="B0JFL6"/>
<dbReference type="STRING" id="449447.MAE_00810"/>
<dbReference type="PaxDb" id="449447-MAE_00810"/>
<dbReference type="EnsemblBacteria" id="BAF99902">
    <property type="protein sequence ID" value="BAF99902"/>
    <property type="gene ID" value="MAE_00810"/>
</dbReference>
<dbReference type="KEGG" id="mar:MAE_00810"/>
<dbReference type="eggNOG" id="COG1160">
    <property type="taxonomic scope" value="Bacteria"/>
</dbReference>
<dbReference type="HOGENOM" id="CLU_016077_6_2_3"/>
<dbReference type="BioCyc" id="MAER449447:MAE_RS00350-MONOMER"/>
<dbReference type="Proteomes" id="UP000001510">
    <property type="component" value="Chromosome"/>
</dbReference>
<dbReference type="GO" id="GO:0005525">
    <property type="term" value="F:GTP binding"/>
    <property type="evidence" value="ECO:0007669"/>
    <property type="project" value="UniProtKB-UniRule"/>
</dbReference>
<dbReference type="GO" id="GO:0043022">
    <property type="term" value="F:ribosome binding"/>
    <property type="evidence" value="ECO:0007669"/>
    <property type="project" value="TreeGrafter"/>
</dbReference>
<dbReference type="GO" id="GO:0042254">
    <property type="term" value="P:ribosome biogenesis"/>
    <property type="evidence" value="ECO:0007669"/>
    <property type="project" value="UniProtKB-KW"/>
</dbReference>
<dbReference type="CDD" id="cd01894">
    <property type="entry name" value="EngA1"/>
    <property type="match status" value="1"/>
</dbReference>
<dbReference type="CDD" id="cd01895">
    <property type="entry name" value="EngA2"/>
    <property type="match status" value="1"/>
</dbReference>
<dbReference type="FunFam" id="3.30.300.20:FF:000004">
    <property type="entry name" value="GTPase Der"/>
    <property type="match status" value="1"/>
</dbReference>
<dbReference type="FunFam" id="3.40.50.300:FF:000040">
    <property type="entry name" value="GTPase Der"/>
    <property type="match status" value="1"/>
</dbReference>
<dbReference type="FunFam" id="3.40.50.300:FF:001185">
    <property type="entry name" value="GTPase Der"/>
    <property type="match status" value="1"/>
</dbReference>
<dbReference type="Gene3D" id="3.30.300.20">
    <property type="match status" value="1"/>
</dbReference>
<dbReference type="Gene3D" id="3.40.50.300">
    <property type="entry name" value="P-loop containing nucleotide triphosphate hydrolases"/>
    <property type="match status" value="2"/>
</dbReference>
<dbReference type="HAMAP" id="MF_00195">
    <property type="entry name" value="GTPase_Der"/>
    <property type="match status" value="1"/>
</dbReference>
<dbReference type="InterPro" id="IPR031166">
    <property type="entry name" value="G_ENGA"/>
</dbReference>
<dbReference type="InterPro" id="IPR006073">
    <property type="entry name" value="GTP-bd"/>
</dbReference>
<dbReference type="InterPro" id="IPR016484">
    <property type="entry name" value="GTPase_Der"/>
</dbReference>
<dbReference type="InterPro" id="IPR032859">
    <property type="entry name" value="KH_dom-like"/>
</dbReference>
<dbReference type="InterPro" id="IPR015946">
    <property type="entry name" value="KH_dom-like_a/b"/>
</dbReference>
<dbReference type="InterPro" id="IPR027417">
    <property type="entry name" value="P-loop_NTPase"/>
</dbReference>
<dbReference type="InterPro" id="IPR005225">
    <property type="entry name" value="Small_GTP-bd"/>
</dbReference>
<dbReference type="NCBIfam" id="TIGR03594">
    <property type="entry name" value="GTPase_EngA"/>
    <property type="match status" value="1"/>
</dbReference>
<dbReference type="NCBIfam" id="TIGR00231">
    <property type="entry name" value="small_GTP"/>
    <property type="match status" value="2"/>
</dbReference>
<dbReference type="PANTHER" id="PTHR43834">
    <property type="entry name" value="GTPASE DER"/>
    <property type="match status" value="1"/>
</dbReference>
<dbReference type="PANTHER" id="PTHR43834:SF6">
    <property type="entry name" value="GTPASE DER"/>
    <property type="match status" value="1"/>
</dbReference>
<dbReference type="Pfam" id="PF14714">
    <property type="entry name" value="KH_dom-like"/>
    <property type="match status" value="1"/>
</dbReference>
<dbReference type="Pfam" id="PF01926">
    <property type="entry name" value="MMR_HSR1"/>
    <property type="match status" value="2"/>
</dbReference>
<dbReference type="PIRSF" id="PIRSF006485">
    <property type="entry name" value="GTP-binding_EngA"/>
    <property type="match status" value="1"/>
</dbReference>
<dbReference type="PRINTS" id="PR00326">
    <property type="entry name" value="GTP1OBG"/>
</dbReference>
<dbReference type="SUPFAM" id="SSF52540">
    <property type="entry name" value="P-loop containing nucleoside triphosphate hydrolases"/>
    <property type="match status" value="2"/>
</dbReference>
<dbReference type="PROSITE" id="PS51712">
    <property type="entry name" value="G_ENGA"/>
    <property type="match status" value="2"/>
</dbReference>
<reference key="1">
    <citation type="journal article" date="2007" name="DNA Res.">
        <title>Complete genomic structure of the bloom-forming toxic cyanobacterium Microcystis aeruginosa NIES-843.</title>
        <authorList>
            <person name="Kaneko T."/>
            <person name="Nakajima N."/>
            <person name="Okamoto S."/>
            <person name="Suzuki I."/>
            <person name="Tanabe Y."/>
            <person name="Tamaoki M."/>
            <person name="Nakamura Y."/>
            <person name="Kasai F."/>
            <person name="Watanabe A."/>
            <person name="Kawashima K."/>
            <person name="Kishida Y."/>
            <person name="Ono A."/>
            <person name="Shimizu Y."/>
            <person name="Takahashi C."/>
            <person name="Minami C."/>
            <person name="Fujishiro T."/>
            <person name="Kohara M."/>
            <person name="Katoh M."/>
            <person name="Nakazaki N."/>
            <person name="Nakayama S."/>
            <person name="Yamada M."/>
            <person name="Tabata S."/>
            <person name="Watanabe M.M."/>
        </authorList>
    </citation>
    <scope>NUCLEOTIDE SEQUENCE [LARGE SCALE GENOMIC DNA]</scope>
    <source>
        <strain>NIES-843 / IAM M-247</strain>
    </source>
</reference>